<name>RS182_SACEN</name>
<dbReference type="EMBL" id="AM420293">
    <property type="protein sequence ID" value="CAM06505.1"/>
    <property type="molecule type" value="Genomic_DNA"/>
</dbReference>
<dbReference type="RefSeq" id="WP_009948341.1">
    <property type="nucleotide sequence ID" value="NC_009142.1"/>
</dbReference>
<dbReference type="SMR" id="A4FR30"/>
<dbReference type="STRING" id="405948.SACE_7349"/>
<dbReference type="KEGG" id="sen:SACE_7349"/>
<dbReference type="eggNOG" id="COG0238">
    <property type="taxonomic scope" value="Bacteria"/>
</dbReference>
<dbReference type="HOGENOM" id="CLU_148710_2_2_11"/>
<dbReference type="OrthoDB" id="9812008at2"/>
<dbReference type="Proteomes" id="UP000006728">
    <property type="component" value="Chromosome"/>
</dbReference>
<dbReference type="GO" id="GO:0022627">
    <property type="term" value="C:cytosolic small ribosomal subunit"/>
    <property type="evidence" value="ECO:0007669"/>
    <property type="project" value="TreeGrafter"/>
</dbReference>
<dbReference type="GO" id="GO:0070181">
    <property type="term" value="F:small ribosomal subunit rRNA binding"/>
    <property type="evidence" value="ECO:0007669"/>
    <property type="project" value="TreeGrafter"/>
</dbReference>
<dbReference type="GO" id="GO:0003735">
    <property type="term" value="F:structural constituent of ribosome"/>
    <property type="evidence" value="ECO:0007669"/>
    <property type="project" value="InterPro"/>
</dbReference>
<dbReference type="GO" id="GO:0006412">
    <property type="term" value="P:translation"/>
    <property type="evidence" value="ECO:0007669"/>
    <property type="project" value="UniProtKB-UniRule"/>
</dbReference>
<dbReference type="FunFam" id="4.10.640.10:FF:000004">
    <property type="entry name" value="30S ribosomal protein S18"/>
    <property type="match status" value="1"/>
</dbReference>
<dbReference type="Gene3D" id="4.10.640.10">
    <property type="entry name" value="Ribosomal protein S18"/>
    <property type="match status" value="1"/>
</dbReference>
<dbReference type="HAMAP" id="MF_00270">
    <property type="entry name" value="Ribosomal_bS18"/>
    <property type="match status" value="1"/>
</dbReference>
<dbReference type="InterPro" id="IPR001648">
    <property type="entry name" value="Ribosomal_bS18"/>
</dbReference>
<dbReference type="InterPro" id="IPR018275">
    <property type="entry name" value="Ribosomal_bS18_CS"/>
</dbReference>
<dbReference type="InterPro" id="IPR036870">
    <property type="entry name" value="Ribosomal_bS18_sf"/>
</dbReference>
<dbReference type="NCBIfam" id="TIGR00165">
    <property type="entry name" value="S18"/>
    <property type="match status" value="1"/>
</dbReference>
<dbReference type="PANTHER" id="PTHR13479">
    <property type="entry name" value="30S RIBOSOMAL PROTEIN S18"/>
    <property type="match status" value="1"/>
</dbReference>
<dbReference type="PANTHER" id="PTHR13479:SF62">
    <property type="entry name" value="SMALL RIBOSOMAL SUBUNIT PROTEIN BS18A"/>
    <property type="match status" value="1"/>
</dbReference>
<dbReference type="Pfam" id="PF01084">
    <property type="entry name" value="Ribosomal_S18"/>
    <property type="match status" value="1"/>
</dbReference>
<dbReference type="PRINTS" id="PR00974">
    <property type="entry name" value="RIBOSOMALS18"/>
</dbReference>
<dbReference type="SUPFAM" id="SSF46911">
    <property type="entry name" value="Ribosomal protein S18"/>
    <property type="match status" value="1"/>
</dbReference>
<dbReference type="PROSITE" id="PS00057">
    <property type="entry name" value="RIBOSOMAL_S18"/>
    <property type="match status" value="1"/>
</dbReference>
<evidence type="ECO:0000255" key="1">
    <source>
        <dbReference type="HAMAP-Rule" id="MF_00270"/>
    </source>
</evidence>
<evidence type="ECO:0000305" key="2"/>
<protein>
    <recommendedName>
        <fullName evidence="1">Small ribosomal subunit protein bS18B</fullName>
    </recommendedName>
    <alternativeName>
        <fullName evidence="2">30S ribosomal protein S18 2</fullName>
    </alternativeName>
</protein>
<gene>
    <name evidence="1" type="primary">rpsR2</name>
    <name type="ordered locus">SACE_7349</name>
</gene>
<accession>A4FR30</accession>
<organism>
    <name type="scientific">Saccharopolyspora erythraea (strain ATCC 11635 / DSM 40517 / JCM 4748 / NBRC 13426 / NCIMB 8594 / NRRL 2338)</name>
    <dbReference type="NCBI Taxonomy" id="405948"/>
    <lineage>
        <taxon>Bacteria</taxon>
        <taxon>Bacillati</taxon>
        <taxon>Actinomycetota</taxon>
        <taxon>Actinomycetes</taxon>
        <taxon>Pseudonocardiales</taxon>
        <taxon>Pseudonocardiaceae</taxon>
        <taxon>Saccharopolyspora</taxon>
    </lineage>
</organism>
<feature type="chain" id="PRO_0000345541" description="Small ribosomal subunit protein bS18B">
    <location>
        <begin position="1"/>
        <end position="79"/>
    </location>
</feature>
<sequence length="79" mass="8967">MAKAPVRKPKKKVCVFCKDKAAQSIDYKDTTLLRKYISDRGKIRARRVTGNCSQHQRDVAIAVKNAREMALLPYTSTAR</sequence>
<comment type="function">
    <text evidence="1">Binds as a heterodimer with protein bS6 to the central domain of the 16S rRNA, where it helps stabilize the platform of the 30S subunit.</text>
</comment>
<comment type="subunit">
    <text evidence="1">Part of the 30S ribosomal subunit. Forms a tight heterodimer with protein bS6.</text>
</comment>
<comment type="similarity">
    <text evidence="1">Belongs to the bacterial ribosomal protein bS18 family.</text>
</comment>
<proteinExistence type="inferred from homology"/>
<keyword id="KW-1185">Reference proteome</keyword>
<keyword id="KW-0687">Ribonucleoprotein</keyword>
<keyword id="KW-0689">Ribosomal protein</keyword>
<keyword id="KW-0694">RNA-binding</keyword>
<keyword id="KW-0699">rRNA-binding</keyword>
<reference key="1">
    <citation type="journal article" date="2007" name="Nat. Biotechnol.">
        <title>Complete genome sequence of the erythromycin-producing bacterium Saccharopolyspora erythraea NRRL23338.</title>
        <authorList>
            <person name="Oliynyk M."/>
            <person name="Samborskyy M."/>
            <person name="Lester J.B."/>
            <person name="Mironenko T."/>
            <person name="Scott N."/>
            <person name="Dickens S."/>
            <person name="Haydock S.F."/>
            <person name="Leadlay P.F."/>
        </authorList>
    </citation>
    <scope>NUCLEOTIDE SEQUENCE [LARGE SCALE GENOMIC DNA]</scope>
    <source>
        <strain>ATCC 11635 / DSM 40517 / JCM 4748 / NBRC 13426 / NCIMB 8594 / NRRL 2338</strain>
    </source>
</reference>